<dbReference type="EC" id="4.1.1.23" evidence="1"/>
<dbReference type="EMBL" id="X73308">
    <property type="protein sequence ID" value="CAA51742.1"/>
    <property type="molecule type" value="Genomic_DNA"/>
</dbReference>
<dbReference type="PIR" id="I40172">
    <property type="entry name" value="I40172"/>
</dbReference>
<dbReference type="SMR" id="P46535"/>
<dbReference type="UniPathway" id="UPA00070">
    <property type="reaction ID" value="UER00120"/>
</dbReference>
<dbReference type="GO" id="GO:0005829">
    <property type="term" value="C:cytosol"/>
    <property type="evidence" value="ECO:0007669"/>
    <property type="project" value="TreeGrafter"/>
</dbReference>
<dbReference type="GO" id="GO:0004590">
    <property type="term" value="F:orotidine-5'-phosphate decarboxylase activity"/>
    <property type="evidence" value="ECO:0007669"/>
    <property type="project" value="UniProtKB-UniRule"/>
</dbReference>
<dbReference type="GO" id="GO:0006207">
    <property type="term" value="P:'de novo' pyrimidine nucleobase biosynthetic process"/>
    <property type="evidence" value="ECO:0007669"/>
    <property type="project" value="InterPro"/>
</dbReference>
<dbReference type="GO" id="GO:0044205">
    <property type="term" value="P:'de novo' UMP biosynthetic process"/>
    <property type="evidence" value="ECO:0007669"/>
    <property type="project" value="UniProtKB-UniRule"/>
</dbReference>
<dbReference type="CDD" id="cd04725">
    <property type="entry name" value="OMP_decarboxylase_like"/>
    <property type="match status" value="1"/>
</dbReference>
<dbReference type="FunFam" id="3.20.20.70:FF:000015">
    <property type="entry name" value="Orotidine 5'-phosphate decarboxylase"/>
    <property type="match status" value="1"/>
</dbReference>
<dbReference type="Gene3D" id="3.20.20.70">
    <property type="entry name" value="Aldolase class I"/>
    <property type="match status" value="1"/>
</dbReference>
<dbReference type="HAMAP" id="MF_01200_B">
    <property type="entry name" value="OMPdecase_type1_B"/>
    <property type="match status" value="1"/>
</dbReference>
<dbReference type="InterPro" id="IPR013785">
    <property type="entry name" value="Aldolase_TIM"/>
</dbReference>
<dbReference type="InterPro" id="IPR014732">
    <property type="entry name" value="OMPdecase"/>
</dbReference>
<dbReference type="InterPro" id="IPR018089">
    <property type="entry name" value="OMPdecase_AS"/>
</dbReference>
<dbReference type="InterPro" id="IPR047596">
    <property type="entry name" value="OMPdecase_bac"/>
</dbReference>
<dbReference type="InterPro" id="IPR001754">
    <property type="entry name" value="OMPdeCOase_dom"/>
</dbReference>
<dbReference type="InterPro" id="IPR011060">
    <property type="entry name" value="RibuloseP-bd_barrel"/>
</dbReference>
<dbReference type="NCBIfam" id="NF001273">
    <property type="entry name" value="PRK00230.1"/>
    <property type="match status" value="1"/>
</dbReference>
<dbReference type="NCBIfam" id="TIGR01740">
    <property type="entry name" value="pyrF"/>
    <property type="match status" value="1"/>
</dbReference>
<dbReference type="PANTHER" id="PTHR32119">
    <property type="entry name" value="OROTIDINE 5'-PHOSPHATE DECARBOXYLASE"/>
    <property type="match status" value="1"/>
</dbReference>
<dbReference type="PANTHER" id="PTHR32119:SF2">
    <property type="entry name" value="OROTIDINE 5'-PHOSPHATE DECARBOXYLASE"/>
    <property type="match status" value="1"/>
</dbReference>
<dbReference type="Pfam" id="PF00215">
    <property type="entry name" value="OMPdecase"/>
    <property type="match status" value="1"/>
</dbReference>
<dbReference type="SMART" id="SM00934">
    <property type="entry name" value="OMPdecase"/>
    <property type="match status" value="1"/>
</dbReference>
<dbReference type="SUPFAM" id="SSF51366">
    <property type="entry name" value="Ribulose-phoshate binding barrel"/>
    <property type="match status" value="1"/>
</dbReference>
<dbReference type="PROSITE" id="PS00156">
    <property type="entry name" value="OMPDECASE"/>
    <property type="match status" value="1"/>
</dbReference>
<accession>P46535</accession>
<reference key="1">
    <citation type="journal article" date="1994" name="Microbiology">
        <title>Molecular characterization of pyrimidine biosynthesis genes from the thermophile Bacillus caldolyticus.</title>
        <authorList>
            <person name="Ghim S.Y."/>
            <person name="Nielsen P."/>
            <person name="Neuhard J."/>
        </authorList>
    </citation>
    <scope>NUCLEOTIDE SEQUENCE [GENOMIC DNA]</scope>
    <scope>FUNCTION</scope>
    <source>
        <strain>DSM 405 / NBRC 15313 / YP-T</strain>
    </source>
</reference>
<evidence type="ECO:0000255" key="1">
    <source>
        <dbReference type="HAMAP-Rule" id="MF_01200"/>
    </source>
</evidence>
<evidence type="ECO:0000305" key="2">
    <source>
    </source>
</evidence>
<keyword id="KW-0210">Decarboxylase</keyword>
<keyword id="KW-0456">Lyase</keyword>
<keyword id="KW-0665">Pyrimidine biosynthesis</keyword>
<protein>
    <recommendedName>
        <fullName evidence="1">Orotidine 5'-phosphate decarboxylase</fullName>
        <ecNumber evidence="1">4.1.1.23</ecNumber>
    </recommendedName>
    <alternativeName>
        <fullName evidence="1">OMP decarboxylase</fullName>
        <shortName evidence="1">OMPDCase</shortName>
        <shortName evidence="1">OMPdecase</shortName>
    </alternativeName>
</protein>
<sequence length="244" mass="26579">MHTPFIVALDFPSKQEVERFLRPFAGTPLFVKVGMELYYQEGPAIVAFLKEQGHAVFLDLKLHDIPNTVKQAMKGLARVGADLVNVHAAGGRRMMEAAIEGLDAGTPSGRMRPRCIAVTQLTSTDERMLHEELWISRPLAETVAHYAALAKESGLDGVVCSANEAAFIKERCGASFLAVTPGIRFADDAAHDQVRVVTPRKARALGSDYIVVGRSLTRAADPLGAYARLQHEWNGGERESTTPT</sequence>
<feature type="chain" id="PRO_0000134525" description="Orotidine 5'-phosphate decarboxylase">
    <location>
        <begin position="1"/>
        <end position="244"/>
    </location>
</feature>
<feature type="active site" description="Proton donor" evidence="1">
    <location>
        <position position="61"/>
    </location>
</feature>
<feature type="binding site" evidence="1">
    <location>
        <position position="10"/>
    </location>
    <ligand>
        <name>substrate</name>
    </ligand>
</feature>
<feature type="binding site" evidence="1">
    <location>
        <position position="32"/>
    </location>
    <ligand>
        <name>substrate</name>
    </ligand>
</feature>
<feature type="binding site" evidence="1">
    <location>
        <begin position="59"/>
        <end position="68"/>
    </location>
    <ligand>
        <name>substrate</name>
    </ligand>
</feature>
<feature type="binding site" evidence="1">
    <location>
        <position position="122"/>
    </location>
    <ligand>
        <name>substrate</name>
    </ligand>
</feature>
<feature type="binding site" evidence="1">
    <location>
        <position position="184"/>
    </location>
    <ligand>
        <name>substrate</name>
    </ligand>
</feature>
<feature type="binding site" evidence="1">
    <location>
        <position position="193"/>
    </location>
    <ligand>
        <name>substrate</name>
    </ligand>
</feature>
<feature type="binding site" evidence="1">
    <location>
        <position position="213"/>
    </location>
    <ligand>
        <name>substrate</name>
    </ligand>
</feature>
<feature type="binding site" evidence="1">
    <location>
        <position position="214"/>
    </location>
    <ligand>
        <name>substrate</name>
    </ligand>
</feature>
<name>PYRF_BACCL</name>
<comment type="function">
    <text evidence="2">Catalyzes the decarboxylation of orotidine 5'-monophosphate (OMP) to uridine 5'-monophosphate (UMP).</text>
</comment>
<comment type="catalytic activity">
    <reaction evidence="1">
        <text>orotidine 5'-phosphate + H(+) = UMP + CO2</text>
        <dbReference type="Rhea" id="RHEA:11596"/>
        <dbReference type="ChEBI" id="CHEBI:15378"/>
        <dbReference type="ChEBI" id="CHEBI:16526"/>
        <dbReference type="ChEBI" id="CHEBI:57538"/>
        <dbReference type="ChEBI" id="CHEBI:57865"/>
        <dbReference type="EC" id="4.1.1.23"/>
    </reaction>
</comment>
<comment type="pathway">
    <text evidence="1">Pyrimidine metabolism; UMP biosynthesis via de novo pathway; UMP from orotate: step 2/2.</text>
</comment>
<comment type="subunit">
    <text evidence="1">Homodimer.</text>
</comment>
<comment type="similarity">
    <text evidence="1">Belongs to the OMP decarboxylase family. Type 1 subfamily.</text>
</comment>
<organism>
    <name type="scientific">Bacillus caldolyticus</name>
    <dbReference type="NCBI Taxonomy" id="1394"/>
    <lineage>
        <taxon>Bacteria</taxon>
        <taxon>Bacillati</taxon>
        <taxon>Bacillota</taxon>
        <taxon>Bacilli</taxon>
        <taxon>Bacillales</taxon>
        <taxon>Anoxybacillaceae</taxon>
        <taxon>Geobacillus</taxon>
        <taxon>Geobacillus thermoleovorans group</taxon>
    </lineage>
</organism>
<gene>
    <name evidence="1" type="primary">pyrF</name>
</gene>
<proteinExistence type="inferred from homology"/>